<accession>Q99LS1</accession>
<feature type="transit peptide" description="Mitochondrion" evidence="2">
    <location>
        <begin position="1"/>
        <end position="38"/>
    </location>
</feature>
<feature type="chain" id="PRO_0000019535" description="Cobalamin trafficking protein CblD">
    <location>
        <begin position="39"/>
        <end position="296"/>
    </location>
</feature>
<feature type="modified residue" description="N6-acetyllysine" evidence="1">
    <location>
        <position position="203"/>
    </location>
</feature>
<feature type="helix" evidence="5">
    <location>
        <begin position="137"/>
        <end position="140"/>
    </location>
</feature>
<feature type="strand" evidence="5">
    <location>
        <begin position="145"/>
        <end position="152"/>
    </location>
</feature>
<feature type="strand" evidence="5">
    <location>
        <begin position="174"/>
        <end position="181"/>
    </location>
</feature>
<feature type="helix" evidence="5">
    <location>
        <begin position="191"/>
        <end position="216"/>
    </location>
</feature>
<feature type="turn" evidence="5">
    <location>
        <begin position="217"/>
        <end position="219"/>
    </location>
</feature>
<feature type="strand" evidence="5">
    <location>
        <begin position="222"/>
        <end position="225"/>
    </location>
</feature>
<feature type="strand" evidence="5">
    <location>
        <begin position="227"/>
        <end position="229"/>
    </location>
</feature>
<feature type="strand" evidence="5">
    <location>
        <begin position="231"/>
        <end position="234"/>
    </location>
</feature>
<feature type="helix" evidence="5">
    <location>
        <begin position="248"/>
        <end position="252"/>
    </location>
</feature>
<feature type="strand" evidence="5">
    <location>
        <begin position="255"/>
        <end position="258"/>
    </location>
</feature>
<feature type="strand" evidence="5">
    <location>
        <begin position="263"/>
        <end position="267"/>
    </location>
</feature>
<feature type="turn" evidence="5">
    <location>
        <begin position="268"/>
        <end position="270"/>
    </location>
</feature>
<feature type="strand" evidence="5">
    <location>
        <begin position="274"/>
        <end position="282"/>
    </location>
</feature>
<feature type="helix" evidence="5">
    <location>
        <begin position="288"/>
        <end position="293"/>
    </location>
</feature>
<organism>
    <name type="scientific">Mus musculus</name>
    <name type="common">Mouse</name>
    <dbReference type="NCBI Taxonomy" id="10090"/>
    <lineage>
        <taxon>Eukaryota</taxon>
        <taxon>Metazoa</taxon>
        <taxon>Chordata</taxon>
        <taxon>Craniata</taxon>
        <taxon>Vertebrata</taxon>
        <taxon>Euteleostomi</taxon>
        <taxon>Mammalia</taxon>
        <taxon>Eutheria</taxon>
        <taxon>Euarchontoglires</taxon>
        <taxon>Glires</taxon>
        <taxon>Rodentia</taxon>
        <taxon>Myomorpha</taxon>
        <taxon>Muroidea</taxon>
        <taxon>Muridae</taxon>
        <taxon>Murinae</taxon>
        <taxon>Mus</taxon>
        <taxon>Mus</taxon>
    </lineage>
</organism>
<protein>
    <recommendedName>
        <fullName>Cobalamin trafficking protein CblD</fullName>
    </recommendedName>
    <alternativeName>
        <fullName evidence="1">CblD</fullName>
    </alternativeName>
    <alternativeName>
        <fullName>Methylmalonic aciduria and homocystinuria type D homolog, mitochondrial</fullName>
    </alternativeName>
</protein>
<proteinExistence type="evidence at protein level"/>
<evidence type="ECO:0000250" key="1">
    <source>
        <dbReference type="UniProtKB" id="Q9H3L0"/>
    </source>
</evidence>
<evidence type="ECO:0000255" key="2"/>
<evidence type="ECO:0000312" key="3">
    <source>
        <dbReference type="MGI" id="MGI:1923786"/>
    </source>
</evidence>
<evidence type="ECO:0007744" key="4">
    <source>
        <dbReference type="PDB" id="5A4R"/>
    </source>
</evidence>
<evidence type="ECO:0007829" key="5">
    <source>
        <dbReference type="PDB" id="5A4R"/>
    </source>
</evidence>
<gene>
    <name evidence="3" type="primary">Mmadhc</name>
</gene>
<keyword id="KW-0002">3D-structure</keyword>
<keyword id="KW-0007">Acetylation</keyword>
<keyword id="KW-0963">Cytoplasm</keyword>
<keyword id="KW-0496">Mitochondrion</keyword>
<keyword id="KW-1185">Reference proteome</keyword>
<keyword id="KW-0809">Transit peptide</keyword>
<name>MMAD_MOUSE</name>
<sequence length="296" mass="32995">MAHVLCNRARLVSYLPGFCSLVKRVINPRAFSTAGSSGSDESHVATAPPDICSRTVWPDETMGPFGPQDQRFQLPGNIGFDCHLNGTASQKKSQAHKTLPDVLAEPLSTERHEFVMAQYVNEFQDSDAPVEQEINSAETYFESAKVECAIQTCPELLRRDFESLFPEVANSKLMILTVTQKTENDMTVWSEEVEVEREVLLEKFISGAKEICYALRAEGYWADFIDPSSGVAFFGPYTNNTLFETDERYRHLGFSVDDLGCCKVIRHSLWGTHVVVGSIFTNATADSSIMRKLSGN</sequence>
<dbReference type="EMBL" id="BC002253">
    <property type="protein sequence ID" value="AAH02253.1"/>
    <property type="molecule type" value="mRNA"/>
</dbReference>
<dbReference type="CCDS" id="CCDS16027.1"/>
<dbReference type="RefSeq" id="NP_598600.1">
    <property type="nucleotide sequence ID" value="NM_133839.3"/>
</dbReference>
<dbReference type="RefSeq" id="XP_006497661.1">
    <property type="nucleotide sequence ID" value="XM_006497598.2"/>
</dbReference>
<dbReference type="PDB" id="5A4R">
    <property type="method" value="X-ray"/>
    <property type="resolution" value="2.25 A"/>
    <property type="chains" value="A=129-296"/>
</dbReference>
<dbReference type="PDBsum" id="5A4R"/>
<dbReference type="SMR" id="Q99LS1"/>
<dbReference type="BioGRID" id="224566">
    <property type="interactions" value="2"/>
</dbReference>
<dbReference type="CORUM" id="Q99LS1"/>
<dbReference type="FunCoup" id="Q99LS1">
    <property type="interactions" value="1998"/>
</dbReference>
<dbReference type="IntAct" id="Q99LS1">
    <property type="interactions" value="1"/>
</dbReference>
<dbReference type="STRING" id="10090.ENSMUSP00000099830"/>
<dbReference type="iPTMnet" id="Q99LS1"/>
<dbReference type="PhosphoSitePlus" id="Q99LS1"/>
<dbReference type="PaxDb" id="10090-ENSMUSP00000099830"/>
<dbReference type="ProteomicsDB" id="295960"/>
<dbReference type="Antibodypedia" id="33644">
    <property type="antibodies" value="209 antibodies from 21 providers"/>
</dbReference>
<dbReference type="Ensembl" id="ENSMUST00000102769.11">
    <property type="protein sequence ID" value="ENSMUSP00000099830.5"/>
    <property type="gene ID" value="ENSMUSG00000026766.17"/>
</dbReference>
<dbReference type="GeneID" id="109129"/>
<dbReference type="KEGG" id="mmu:109129"/>
<dbReference type="UCSC" id="uc008jqc.1">
    <property type="organism name" value="mouse"/>
</dbReference>
<dbReference type="AGR" id="MGI:1923786"/>
<dbReference type="CTD" id="27249"/>
<dbReference type="MGI" id="MGI:1923786">
    <property type="gene designation" value="Mmadhc"/>
</dbReference>
<dbReference type="VEuPathDB" id="HostDB:ENSMUSG00000026766"/>
<dbReference type="eggNOG" id="KOG3994">
    <property type="taxonomic scope" value="Eukaryota"/>
</dbReference>
<dbReference type="GeneTree" id="ENSGT00390000015050"/>
<dbReference type="HOGENOM" id="CLU_066240_0_0_1"/>
<dbReference type="InParanoid" id="Q99LS1"/>
<dbReference type="OMA" id="PECCGMI"/>
<dbReference type="OrthoDB" id="10263782at2759"/>
<dbReference type="PhylomeDB" id="Q99LS1"/>
<dbReference type="TreeFam" id="TF314208"/>
<dbReference type="Reactome" id="R-MMU-9759218">
    <property type="pathway name" value="Cobalamin (Cbl) metabolism"/>
</dbReference>
<dbReference type="BioGRID-ORCS" id="109129">
    <property type="hits" value="13 hits in 76 CRISPR screens"/>
</dbReference>
<dbReference type="ChiTaRS" id="Mmadhc">
    <property type="organism name" value="mouse"/>
</dbReference>
<dbReference type="EvolutionaryTrace" id="Q99LS1"/>
<dbReference type="PRO" id="PR:Q99LS1"/>
<dbReference type="Proteomes" id="UP000000589">
    <property type="component" value="Chromosome 2"/>
</dbReference>
<dbReference type="RNAct" id="Q99LS1">
    <property type="molecule type" value="protein"/>
</dbReference>
<dbReference type="Bgee" id="ENSMUSG00000026766">
    <property type="expression patterns" value="Expressed in interventricular septum and 261 other cell types or tissues"/>
</dbReference>
<dbReference type="ExpressionAtlas" id="Q99LS1">
    <property type="expression patterns" value="baseline and differential"/>
</dbReference>
<dbReference type="GO" id="GO:0005737">
    <property type="term" value="C:cytoplasm"/>
    <property type="evidence" value="ECO:0000250"/>
    <property type="project" value="UniProtKB"/>
</dbReference>
<dbReference type="GO" id="GO:0005829">
    <property type="term" value="C:cytosol"/>
    <property type="evidence" value="ECO:0000266"/>
    <property type="project" value="MGI"/>
</dbReference>
<dbReference type="GO" id="GO:0005739">
    <property type="term" value="C:mitochondrion"/>
    <property type="evidence" value="ECO:0000250"/>
    <property type="project" value="UniProtKB"/>
</dbReference>
<dbReference type="GO" id="GO:0140104">
    <property type="term" value="F:molecular carrier activity"/>
    <property type="evidence" value="ECO:0000266"/>
    <property type="project" value="MGI"/>
</dbReference>
<dbReference type="GO" id="GO:0009235">
    <property type="term" value="P:cobalamin metabolic process"/>
    <property type="evidence" value="ECO:0000250"/>
    <property type="project" value="UniProtKB"/>
</dbReference>
<dbReference type="InterPro" id="IPR019362">
    <property type="entry name" value="MMADHC"/>
</dbReference>
<dbReference type="PANTHER" id="PTHR13192:SF3">
    <property type="entry name" value="COBALAMIN TRAFFICKING PROTEIN CBLD"/>
    <property type="match status" value="1"/>
</dbReference>
<dbReference type="PANTHER" id="PTHR13192">
    <property type="entry name" value="MY011 PROTEIN"/>
    <property type="match status" value="1"/>
</dbReference>
<dbReference type="Pfam" id="PF10229">
    <property type="entry name" value="MMADHC"/>
    <property type="match status" value="1"/>
</dbReference>
<comment type="function">
    <text evidence="1">Involved in cobalamin metabolism and trafficking. Plays a role in regulating the biosynthesis and the proportion of two coenzymes, methylcob(III)alamin (MeCbl) and 5'-deoxyadenosylcobalamin (AdoCbl). Promotes oxidation of cob(II)alamin bound to MMACHC. The processing of cobalamin in the cytosol occurs in a multiprotein complex composed of at least MMACHC, MMADHC, MTRR (methionine synthase reductase) and MTR (methionine synthase) which may contribute to shuttle safely and efficiently cobalamin towards MTR in order to produce methionine.</text>
</comment>
<comment type="subunit">
    <text evidence="1">Heterodimer with MMACHC. Forms a multiprotein complex with MMACHC, MTR and MTRR.</text>
</comment>
<comment type="subcellular location">
    <subcellularLocation>
        <location evidence="1">Cytoplasm</location>
    </subcellularLocation>
    <subcellularLocation>
        <location evidence="1">Mitochondrion</location>
    </subcellularLocation>
</comment>
<reference key="1">
    <citation type="journal article" date="2004" name="Genome Res.">
        <title>The status, quality, and expansion of the NIH full-length cDNA project: the Mammalian Gene Collection (MGC).</title>
        <authorList>
            <consortium name="The MGC Project Team"/>
        </authorList>
    </citation>
    <scope>NUCLEOTIDE SEQUENCE [LARGE SCALE MRNA]</scope>
    <source>
        <strain>Czech II</strain>
        <tissue>Mammary tumor</tissue>
    </source>
</reference>
<reference evidence="4" key="2">
    <citation type="journal article" date="2015" name="J. Biol. Chem.">
        <title>Structural insights into the MMACHC-MMADHC protein complex involved in vitamin B12 trafficking.</title>
        <authorList>
            <person name="Froese D.S."/>
            <person name="Kopec J."/>
            <person name="Fitzpatrick F."/>
            <person name="Schuller M."/>
            <person name="McCorvie T.J."/>
            <person name="Chalk R."/>
            <person name="Plessl T."/>
            <person name="Fettelschoss V."/>
            <person name="Fowler B."/>
            <person name="Baumgartner M.R."/>
            <person name="Yue W.W."/>
        </authorList>
    </citation>
    <scope>X-RAY CRYSTALLOGRAPHY (2.25 ANGSTROMS) OF 129-296</scope>
</reference>